<sequence length="312" mass="32826">MRIAFLGTPAFAVAALDALERAGHALVTVVAQPDRPAGRGQALREPATKAWARARGVPVLQPEKVRDGTLAAALRALAPDALVVAAYGRILGKDLLTLAPHGALNVHGSLLPRWRGAAPIQWAVAEGERETGVTIMQMDEGLDTGDVLLQRALEIGEDDTSETLAPRLAALGGEALVEALRLLEAGALVPVRQDAAQATLARILEKEDGRIAWTRPARRISDRLRGFTPWPGAFTTLEGRTLKVLEARPGADVATPAGEPGEAEVVPGRGLAVACGGGSALLVTRVQLEGRPAQSALDLANGLRRKRFRLGT</sequence>
<comment type="function">
    <text evidence="1">Attaches a formyl group to the free amino group of methionyl-tRNA(fMet). The formyl group appears to play a dual role in the initiator identity of N-formylmethionyl-tRNA by promoting its recognition by IF2 and preventing the misappropriation of this tRNA by the elongation apparatus.</text>
</comment>
<comment type="catalytic activity">
    <reaction evidence="1">
        <text>L-methionyl-tRNA(fMet) + (6R)-10-formyltetrahydrofolate = N-formyl-L-methionyl-tRNA(fMet) + (6S)-5,6,7,8-tetrahydrofolate + H(+)</text>
        <dbReference type="Rhea" id="RHEA:24380"/>
        <dbReference type="Rhea" id="RHEA-COMP:9952"/>
        <dbReference type="Rhea" id="RHEA-COMP:9953"/>
        <dbReference type="ChEBI" id="CHEBI:15378"/>
        <dbReference type="ChEBI" id="CHEBI:57453"/>
        <dbReference type="ChEBI" id="CHEBI:78530"/>
        <dbReference type="ChEBI" id="CHEBI:78844"/>
        <dbReference type="ChEBI" id="CHEBI:195366"/>
        <dbReference type="EC" id="2.1.2.9"/>
    </reaction>
</comment>
<comment type="similarity">
    <text evidence="1">Belongs to the Fmt family.</text>
</comment>
<name>FMT_ANAD2</name>
<keyword id="KW-0648">Protein biosynthesis</keyword>
<keyword id="KW-0808">Transferase</keyword>
<organism>
    <name type="scientific">Anaeromyxobacter dehalogenans (strain 2CP-1 / ATCC BAA-258)</name>
    <dbReference type="NCBI Taxonomy" id="455488"/>
    <lineage>
        <taxon>Bacteria</taxon>
        <taxon>Pseudomonadati</taxon>
        <taxon>Myxococcota</taxon>
        <taxon>Myxococcia</taxon>
        <taxon>Myxococcales</taxon>
        <taxon>Cystobacterineae</taxon>
        <taxon>Anaeromyxobacteraceae</taxon>
        <taxon>Anaeromyxobacter</taxon>
    </lineage>
</organism>
<dbReference type="EC" id="2.1.2.9" evidence="1"/>
<dbReference type="EMBL" id="CP001359">
    <property type="protein sequence ID" value="ACL67431.1"/>
    <property type="molecule type" value="Genomic_DNA"/>
</dbReference>
<dbReference type="RefSeq" id="WP_015935151.1">
    <property type="nucleotide sequence ID" value="NC_011891.1"/>
</dbReference>
<dbReference type="SMR" id="B8J9P3"/>
<dbReference type="KEGG" id="acp:A2cp1_4113"/>
<dbReference type="HOGENOM" id="CLU_033347_2_0_7"/>
<dbReference type="Proteomes" id="UP000007089">
    <property type="component" value="Chromosome"/>
</dbReference>
<dbReference type="GO" id="GO:0005829">
    <property type="term" value="C:cytosol"/>
    <property type="evidence" value="ECO:0007669"/>
    <property type="project" value="TreeGrafter"/>
</dbReference>
<dbReference type="GO" id="GO:0004479">
    <property type="term" value="F:methionyl-tRNA formyltransferase activity"/>
    <property type="evidence" value="ECO:0007669"/>
    <property type="project" value="UniProtKB-UniRule"/>
</dbReference>
<dbReference type="CDD" id="cd08646">
    <property type="entry name" value="FMT_core_Met-tRNA-FMT_N"/>
    <property type="match status" value="1"/>
</dbReference>
<dbReference type="CDD" id="cd08704">
    <property type="entry name" value="Met_tRNA_FMT_C"/>
    <property type="match status" value="1"/>
</dbReference>
<dbReference type="Gene3D" id="3.10.25.10">
    <property type="entry name" value="Formyl transferase, C-terminal domain"/>
    <property type="match status" value="1"/>
</dbReference>
<dbReference type="Gene3D" id="3.40.50.170">
    <property type="entry name" value="Formyl transferase, N-terminal domain"/>
    <property type="match status" value="1"/>
</dbReference>
<dbReference type="HAMAP" id="MF_00182">
    <property type="entry name" value="Formyl_trans"/>
    <property type="match status" value="1"/>
</dbReference>
<dbReference type="InterPro" id="IPR005794">
    <property type="entry name" value="Fmt"/>
</dbReference>
<dbReference type="InterPro" id="IPR005793">
    <property type="entry name" value="Formyl_trans_C"/>
</dbReference>
<dbReference type="InterPro" id="IPR037022">
    <property type="entry name" value="Formyl_trans_C_sf"/>
</dbReference>
<dbReference type="InterPro" id="IPR002376">
    <property type="entry name" value="Formyl_transf_N"/>
</dbReference>
<dbReference type="InterPro" id="IPR036477">
    <property type="entry name" value="Formyl_transf_N_sf"/>
</dbReference>
<dbReference type="InterPro" id="IPR011034">
    <property type="entry name" value="Formyl_transferase-like_C_sf"/>
</dbReference>
<dbReference type="InterPro" id="IPR001555">
    <property type="entry name" value="GART_AS"/>
</dbReference>
<dbReference type="InterPro" id="IPR044135">
    <property type="entry name" value="Met-tRNA-FMT_C"/>
</dbReference>
<dbReference type="InterPro" id="IPR041711">
    <property type="entry name" value="Met-tRNA-FMT_N"/>
</dbReference>
<dbReference type="NCBIfam" id="TIGR00460">
    <property type="entry name" value="fmt"/>
    <property type="match status" value="1"/>
</dbReference>
<dbReference type="PANTHER" id="PTHR11138">
    <property type="entry name" value="METHIONYL-TRNA FORMYLTRANSFERASE"/>
    <property type="match status" value="1"/>
</dbReference>
<dbReference type="PANTHER" id="PTHR11138:SF5">
    <property type="entry name" value="METHIONYL-TRNA FORMYLTRANSFERASE, MITOCHONDRIAL"/>
    <property type="match status" value="1"/>
</dbReference>
<dbReference type="Pfam" id="PF02911">
    <property type="entry name" value="Formyl_trans_C"/>
    <property type="match status" value="1"/>
</dbReference>
<dbReference type="Pfam" id="PF00551">
    <property type="entry name" value="Formyl_trans_N"/>
    <property type="match status" value="1"/>
</dbReference>
<dbReference type="SUPFAM" id="SSF50486">
    <property type="entry name" value="FMT C-terminal domain-like"/>
    <property type="match status" value="1"/>
</dbReference>
<dbReference type="SUPFAM" id="SSF53328">
    <property type="entry name" value="Formyltransferase"/>
    <property type="match status" value="1"/>
</dbReference>
<dbReference type="PROSITE" id="PS00373">
    <property type="entry name" value="GART"/>
    <property type="match status" value="1"/>
</dbReference>
<reference key="1">
    <citation type="submission" date="2009-01" db="EMBL/GenBank/DDBJ databases">
        <title>Complete sequence of Anaeromyxobacter dehalogenans 2CP-1.</title>
        <authorList>
            <person name="Lucas S."/>
            <person name="Copeland A."/>
            <person name="Lapidus A."/>
            <person name="Glavina del Rio T."/>
            <person name="Dalin E."/>
            <person name="Tice H."/>
            <person name="Bruce D."/>
            <person name="Goodwin L."/>
            <person name="Pitluck S."/>
            <person name="Saunders E."/>
            <person name="Brettin T."/>
            <person name="Detter J.C."/>
            <person name="Han C."/>
            <person name="Larimer F."/>
            <person name="Land M."/>
            <person name="Hauser L."/>
            <person name="Kyrpides N."/>
            <person name="Ovchinnikova G."/>
            <person name="Beliaev A.S."/>
            <person name="Richardson P."/>
        </authorList>
    </citation>
    <scope>NUCLEOTIDE SEQUENCE [LARGE SCALE GENOMIC DNA]</scope>
    <source>
        <strain>2CP-1 / ATCC BAA-258</strain>
    </source>
</reference>
<evidence type="ECO:0000255" key="1">
    <source>
        <dbReference type="HAMAP-Rule" id="MF_00182"/>
    </source>
</evidence>
<feature type="chain" id="PRO_1000190001" description="Methionyl-tRNA formyltransferase">
    <location>
        <begin position="1"/>
        <end position="312"/>
    </location>
</feature>
<feature type="binding site" evidence="1">
    <location>
        <begin position="109"/>
        <end position="112"/>
    </location>
    <ligand>
        <name>(6S)-5,6,7,8-tetrahydrofolate</name>
        <dbReference type="ChEBI" id="CHEBI:57453"/>
    </ligand>
</feature>
<accession>B8J9P3</accession>
<protein>
    <recommendedName>
        <fullName evidence="1">Methionyl-tRNA formyltransferase</fullName>
        <ecNumber evidence="1">2.1.2.9</ecNumber>
    </recommendedName>
</protein>
<proteinExistence type="inferred from homology"/>
<gene>
    <name evidence="1" type="primary">fmt</name>
    <name type="ordered locus">A2cp1_4113</name>
</gene>